<accession>Q8U3D2</accession>
<evidence type="ECO:0000250" key="1">
    <source>
        <dbReference type="UniProtKB" id="Q746M7"/>
    </source>
</evidence>
<evidence type="ECO:0000255" key="2">
    <source>
        <dbReference type="PROSITE-ProRule" id="PRU00142"/>
    </source>
</evidence>
<evidence type="ECO:0000255" key="3">
    <source>
        <dbReference type="PROSITE-ProRule" id="PRU00150"/>
    </source>
</evidence>
<evidence type="ECO:0000269" key="4">
    <source>
    </source>
</evidence>
<evidence type="ECO:0000269" key="5">
    <source>
    </source>
</evidence>
<evidence type="ECO:0000269" key="6">
    <source>
    </source>
</evidence>
<evidence type="ECO:0000269" key="7">
    <source>
    </source>
</evidence>
<evidence type="ECO:0000269" key="8">
    <source>
    </source>
</evidence>
<evidence type="ECO:0000269" key="9">
    <source>
    </source>
</evidence>
<evidence type="ECO:0000303" key="10">
    <source>
    </source>
</evidence>
<evidence type="ECO:0000303" key="11">
    <source>
    </source>
</evidence>
<evidence type="ECO:0000305" key="12"/>
<evidence type="ECO:0000305" key="13">
    <source>
    </source>
</evidence>
<evidence type="ECO:0000305" key="14">
    <source>
    </source>
</evidence>
<evidence type="ECO:0000312" key="15">
    <source>
        <dbReference type="EMBL" id="AAL80661.1"/>
    </source>
</evidence>
<evidence type="ECO:0007744" key="16">
    <source>
        <dbReference type="PDB" id="1U04"/>
    </source>
</evidence>
<evidence type="ECO:0007744" key="17">
    <source>
        <dbReference type="PDB" id="1Z25"/>
    </source>
</evidence>
<evidence type="ECO:0007744" key="18">
    <source>
        <dbReference type="PDB" id="1Z26"/>
    </source>
</evidence>
<evidence type="ECO:0007829" key="19">
    <source>
        <dbReference type="PDB" id="1U04"/>
    </source>
</evidence>
<evidence type="ECO:0007829" key="20">
    <source>
        <dbReference type="PDB" id="1Z25"/>
    </source>
</evidence>
<evidence type="ECO:0007829" key="21">
    <source>
        <dbReference type="PDB" id="1Z26"/>
    </source>
</evidence>
<evidence type="ECO:0007829" key="22">
    <source>
        <dbReference type="PDB" id="8JPX"/>
    </source>
</evidence>
<keyword id="KW-0002">3D-structure</keyword>
<keyword id="KW-0238">DNA-binding</keyword>
<keyword id="KW-0255">Endonuclease</keyword>
<keyword id="KW-0378">Hydrolase</keyword>
<keyword id="KW-0464">Manganese</keyword>
<keyword id="KW-0479">Metal-binding</keyword>
<keyword id="KW-0540">Nuclease</keyword>
<keyword id="KW-1185">Reference proteome</keyword>
<dbReference type="EC" id="3.1.24.-" evidence="6 7"/>
<dbReference type="EMBL" id="AE009950">
    <property type="protein sequence ID" value="AAL80661.1"/>
    <property type="molecule type" value="Genomic_DNA"/>
</dbReference>
<dbReference type="RefSeq" id="WP_011011654.1">
    <property type="nucleotide sequence ID" value="NZ_CP023154.1"/>
</dbReference>
<dbReference type="PDB" id="1U04">
    <property type="method" value="X-ray"/>
    <property type="resolution" value="2.25 A"/>
    <property type="chains" value="A=1-770"/>
</dbReference>
<dbReference type="PDB" id="1Z25">
    <property type="method" value="X-ray"/>
    <property type="resolution" value="2.70 A"/>
    <property type="chains" value="A=1-770"/>
</dbReference>
<dbReference type="PDB" id="1Z26">
    <property type="method" value="X-ray"/>
    <property type="resolution" value="2.50 A"/>
    <property type="chains" value="A=1-770"/>
</dbReference>
<dbReference type="PDB" id="8JPX">
    <property type="method" value="EM"/>
    <property type="resolution" value="2.90 A"/>
    <property type="chains" value="A/B=1-770"/>
</dbReference>
<dbReference type="PDBsum" id="1U04"/>
<dbReference type="PDBsum" id="1Z25"/>
<dbReference type="PDBsum" id="1Z26"/>
<dbReference type="PDBsum" id="8JPX"/>
<dbReference type="EMDB" id="EMD-36489"/>
<dbReference type="SASBDB" id="Q8U3D2"/>
<dbReference type="SMR" id="Q8U3D2"/>
<dbReference type="STRING" id="186497.PF0537"/>
<dbReference type="PaxDb" id="186497-PF0537"/>
<dbReference type="KEGG" id="pfu:PF0537"/>
<dbReference type="PATRIC" id="fig|186497.12.peg.562"/>
<dbReference type="eggNOG" id="arCOG03890">
    <property type="taxonomic scope" value="Archaea"/>
</dbReference>
<dbReference type="HOGENOM" id="CLU_362759_0_0_2"/>
<dbReference type="OrthoDB" id="65217at2157"/>
<dbReference type="EvolutionaryTrace" id="Q8U3D2"/>
<dbReference type="Proteomes" id="UP000001013">
    <property type="component" value="Chromosome"/>
</dbReference>
<dbReference type="GO" id="GO:0003677">
    <property type="term" value="F:DNA binding"/>
    <property type="evidence" value="ECO:0007669"/>
    <property type="project" value="UniProtKB-KW"/>
</dbReference>
<dbReference type="GO" id="GO:0004520">
    <property type="term" value="F:DNA endonuclease activity"/>
    <property type="evidence" value="ECO:0000314"/>
    <property type="project" value="UniProtKB"/>
</dbReference>
<dbReference type="GO" id="GO:0030145">
    <property type="term" value="F:manganese ion binding"/>
    <property type="evidence" value="ECO:0000314"/>
    <property type="project" value="UniProtKB"/>
</dbReference>
<dbReference type="GO" id="GO:0003723">
    <property type="term" value="F:RNA binding"/>
    <property type="evidence" value="ECO:0007669"/>
    <property type="project" value="InterPro"/>
</dbReference>
<dbReference type="GO" id="GO:0044355">
    <property type="term" value="P:clearance of foreign intracellular DNA"/>
    <property type="evidence" value="ECO:0000315"/>
    <property type="project" value="UniProtKB"/>
</dbReference>
<dbReference type="CDD" id="cd02825">
    <property type="entry name" value="PAZ"/>
    <property type="match status" value="1"/>
</dbReference>
<dbReference type="CDD" id="cd02826">
    <property type="entry name" value="Piwi-like"/>
    <property type="match status" value="1"/>
</dbReference>
<dbReference type="Gene3D" id="3.40.50.2300">
    <property type="match status" value="1"/>
</dbReference>
<dbReference type="Gene3D" id="3.90.70.180">
    <property type="match status" value="1"/>
</dbReference>
<dbReference type="Gene3D" id="3.30.420.10">
    <property type="entry name" value="Ribonuclease H-like superfamily/Ribonuclease H"/>
    <property type="match status" value="1"/>
</dbReference>
<dbReference type="InterPro" id="IPR055253">
    <property type="entry name" value="Ago_N_thermococcales"/>
</dbReference>
<dbReference type="InterPro" id="IPR021103">
    <property type="entry name" value="PAZ_arc"/>
</dbReference>
<dbReference type="InterPro" id="IPR003100">
    <property type="entry name" value="PAZ_dom"/>
</dbReference>
<dbReference type="InterPro" id="IPR036085">
    <property type="entry name" value="PAZ_dom_sf"/>
</dbReference>
<dbReference type="InterPro" id="IPR003165">
    <property type="entry name" value="Piwi"/>
</dbReference>
<dbReference type="InterPro" id="IPR012337">
    <property type="entry name" value="RNaseH-like_sf"/>
</dbReference>
<dbReference type="InterPro" id="IPR036397">
    <property type="entry name" value="RNaseH_sf"/>
</dbReference>
<dbReference type="Pfam" id="PF22476">
    <property type="entry name" value="Ago_N_3"/>
    <property type="match status" value="1"/>
</dbReference>
<dbReference type="Pfam" id="PF12212">
    <property type="entry name" value="PAZ_2"/>
    <property type="match status" value="1"/>
</dbReference>
<dbReference type="Pfam" id="PF02171">
    <property type="entry name" value="Piwi"/>
    <property type="match status" value="1"/>
</dbReference>
<dbReference type="SMART" id="SM00950">
    <property type="entry name" value="Piwi"/>
    <property type="match status" value="1"/>
</dbReference>
<dbReference type="SUPFAM" id="SSF101690">
    <property type="entry name" value="PAZ domain"/>
    <property type="match status" value="1"/>
</dbReference>
<dbReference type="SUPFAM" id="SSF53098">
    <property type="entry name" value="Ribonuclease H-like"/>
    <property type="match status" value="1"/>
</dbReference>
<dbReference type="PROSITE" id="PS50821">
    <property type="entry name" value="PAZ"/>
    <property type="match status" value="1"/>
</dbReference>
<dbReference type="PROSITE" id="PS50822">
    <property type="entry name" value="PIWI"/>
    <property type="match status" value="1"/>
</dbReference>
<reference evidence="15" key="1">
    <citation type="journal article" date="1999" name="Genetics">
        <title>Divergence of the hyperthermophilic archaea Pyrococcus furiosus and P. horikoshii inferred from complete genomic sequences.</title>
        <authorList>
            <person name="Maeder D.L."/>
            <person name="Weiss R.B."/>
            <person name="Dunn D.M."/>
            <person name="Cherry J.L."/>
            <person name="Gonzalez J.M."/>
            <person name="DiRuggiero J."/>
            <person name="Robb F.T."/>
        </authorList>
    </citation>
    <scope>NUCLEOTIDE SEQUENCE [LARGE SCALE GENOMIC DNA]</scope>
    <source>
        <strain>ATCC 43587 / DSM 3638 / JCM 8422 / Vc1</strain>
    </source>
</reference>
<reference key="2">
    <citation type="journal article" date="2015" name="Nucleic Acids Res.">
        <title>Argonaute of the archaeon Pyrococcus furiosus is a DNA-guided nuclease that targets cognate DNA.</title>
        <authorList>
            <person name="Swarts D.C."/>
            <person name="Hegge J.W."/>
            <person name="Hinojo I."/>
            <person name="Shiimori M."/>
            <person name="Ellis M.A."/>
            <person name="Dumrongkulraksa J."/>
            <person name="Terns R.M."/>
            <person name="Terns M.P."/>
            <person name="van der Oost J."/>
        </authorList>
    </citation>
    <scope>FUNCTION</scope>
    <scope>CATALYTIC ACTIVITY</scope>
    <scope>COFACTOR</scope>
    <scope>ACTIVITY REGULATION</scope>
    <scope>BIOPHYSICOCHEMICAL PROPERTIES</scope>
    <scope>DISRUPTION PHENOTYPE</scope>
    <scope>MUTAGENESIS OF ASP-558; GLU-592; GLU-596; ASP-628 AND HIS-745</scope>
    <source>
        <strain>ATCC 43587 / JFW02</strain>
    </source>
</reference>
<reference key="3">
    <citation type="journal article" date="2017" name="ACS Synth. Biol.">
        <title>Programmable DNA-Guided Artificial Restriction Enzymes.</title>
        <authorList>
            <person name="Enghiad B."/>
            <person name="Zhao H."/>
        </authorList>
    </citation>
    <scope>FUNCTION</scope>
    <scope>CATALYTIC ACTIVITY</scope>
    <scope>BIOTECHNOLOGY</scope>
</reference>
<reference key="4">
    <citation type="journal article" date="2019" name="Chem. Commun. (Camb.)">
        <title>Pyrococcus furiosus Argonaute-mediated nucleic acid detection.</title>
        <authorList>
            <person name="He R."/>
            <person name="Wang L."/>
            <person name="Wang F."/>
            <person name="Li W."/>
            <person name="Liu Y."/>
            <person name="Li A."/>
            <person name="Wang Y."/>
            <person name="Mao W."/>
            <person name="Zhai C."/>
            <person name="Ma L."/>
        </authorList>
    </citation>
    <scope>BIOTECHNOLOGY</scope>
</reference>
<reference key="5">
    <citation type="journal article" date="2019" name="Nucleic Acids Res.">
        <title>The prokaryotic Argonaute proteins enhance homology sequence-directed recombination in bacteria.</title>
        <authorList>
            <person name="Fu L."/>
            <person name="Xie C."/>
            <person name="Jin Z."/>
            <person name="Tu Z."/>
            <person name="Han L."/>
            <person name="Jin M."/>
            <person name="Xiang Y."/>
            <person name="Zhang A."/>
        </authorList>
    </citation>
    <scope>BIOTECHNOLOGY</scope>
</reference>
<reference evidence="16" key="6">
    <citation type="journal article" date="2004" name="Science">
        <title>Crystal structure of Argonaute and its implications for RISC slicer activity.</title>
        <authorList>
            <person name="Song J.J."/>
            <person name="Smith S.K."/>
            <person name="Hannon G.J."/>
            <person name="Joshua-Tor L."/>
        </authorList>
    </citation>
    <scope>X-RAY CRYSTALLOGRAPHY (2.25 ANGSTROMS)</scope>
    <scope>POSSIBLE ACTIVE SITES</scope>
    <scope>SUBUNIT</scope>
    <scope>DOMAIN</scope>
    <source>
        <strain>ATCC 43587 / DSM 3638 / JCM 8422 / Vc1</strain>
    </source>
</reference>
<reference evidence="17 18" key="7">
    <citation type="journal article" date="2005" name="Nat. Struct. Mol. Biol.">
        <title>Purified Argonaute2 and an siRNA form recombinant human RISC.</title>
        <authorList>
            <person name="Rivas F.V."/>
            <person name="Tolia N.H."/>
            <person name="Song J.-J."/>
            <person name="Aragon J.P."/>
            <person name="Liu J."/>
            <person name="Hannon G.J."/>
            <person name="Joshua-Tor L."/>
        </authorList>
    </citation>
    <scope>X-RAY CRYSTALLOGRAPHY (2.50 ANGSTROMS) IN COMPLEX WITH MANGANESE</scope>
    <scope>POSSIBLE ACTIVE SITES</scope>
    <scope>COFACTOR</scope>
    <scope>SUBUNIT</scope>
</reference>
<feature type="chain" id="PRO_0000457790" description="Protein argonaute">
    <location>
        <begin position="1"/>
        <end position="770"/>
    </location>
</feature>
<feature type="domain" description="PAZ" evidence="2 4">
    <location>
        <begin position="154"/>
        <end position="272"/>
    </location>
</feature>
<feature type="domain" description="Piwi" evidence="3 4">
    <location>
        <begin position="473"/>
        <end position="756"/>
    </location>
</feature>
<feature type="region of interest" description="N-terminal domain" evidence="4">
    <location>
        <begin position="1"/>
        <end position="151"/>
    </location>
</feature>
<feature type="region of interest" description="Interdomain connector" evidence="4">
    <location>
        <begin position="276"/>
        <end position="361"/>
    </location>
</feature>
<feature type="region of interest" description="Mid domain" evidence="4">
    <location>
        <begin position="362"/>
        <end position="544"/>
    </location>
</feature>
<feature type="active site" evidence="13 14">
    <location>
        <position position="558"/>
    </location>
</feature>
<feature type="active site" evidence="1">
    <location>
        <position position="596"/>
    </location>
</feature>
<feature type="active site" evidence="13 14">
    <location>
        <position position="628"/>
    </location>
</feature>
<feature type="active site" evidence="14">
    <location>
        <position position="745"/>
    </location>
</feature>
<feature type="binding site" evidence="1 5 17">
    <location>
        <position position="558"/>
    </location>
    <ligand>
        <name>Mn(2+)</name>
        <dbReference type="ChEBI" id="CHEBI:29035"/>
        <label>1</label>
    </ligand>
</feature>
<feature type="binding site" evidence="1">
    <location>
        <position position="558"/>
    </location>
    <ligand>
        <name>Mn(2+)</name>
        <dbReference type="ChEBI" id="CHEBI:29035"/>
        <label>2</label>
    </ligand>
</feature>
<feature type="binding site" evidence="1 5 17">
    <location>
        <position position="628"/>
    </location>
    <ligand>
        <name>Mn(2+)</name>
        <dbReference type="ChEBI" id="CHEBI:29035"/>
        <label>1</label>
    </ligand>
</feature>
<feature type="binding site" evidence="5 17">
    <location>
        <position position="745"/>
    </location>
    <ligand>
        <name>Mn(2+)</name>
        <dbReference type="ChEBI" id="CHEBI:29035"/>
        <label>1</label>
    </ligand>
</feature>
<feature type="binding site" evidence="1">
    <location>
        <position position="770"/>
    </location>
    <ligand>
        <name>Mn(2+)</name>
        <dbReference type="ChEBI" id="CHEBI:29035"/>
        <label>3</label>
    </ligand>
</feature>
<feature type="mutagenesis site" description="No target DNA cleavage." evidence="6">
    <original>D</original>
    <variation>A</variation>
    <location>
        <position position="558"/>
    </location>
</feature>
<feature type="mutagenesis site" description="Wild-type target DNA cleavage." evidence="6">
    <original>E</original>
    <variation>A</variation>
    <location>
        <position position="592"/>
    </location>
</feature>
<feature type="mutagenesis site" description="Impaired target DNA cleavage." evidence="6">
    <original>E</original>
    <variation>A</variation>
    <location>
        <position position="596"/>
    </location>
</feature>
<feature type="mutagenesis site" description="No target DNA cleavage." evidence="6">
    <original>D</original>
    <variation>A</variation>
    <location>
        <position position="628"/>
    </location>
</feature>
<feature type="mutagenesis site" description="Impaired target DNA cleavage." evidence="6">
    <original>H</original>
    <variation>A</variation>
    <location>
        <position position="745"/>
    </location>
</feature>
<feature type="strand" evidence="19">
    <location>
        <begin position="2"/>
        <end position="12"/>
    </location>
</feature>
<feature type="helix" evidence="19">
    <location>
        <begin position="14"/>
        <end position="16"/>
    </location>
</feature>
<feature type="strand" evidence="19">
    <location>
        <begin position="21"/>
        <end position="25"/>
    </location>
</feature>
<feature type="helix" evidence="22">
    <location>
        <begin position="30"/>
        <end position="33"/>
    </location>
</feature>
<feature type="helix" evidence="19">
    <location>
        <begin position="41"/>
        <end position="47"/>
    </location>
</feature>
<feature type="strand" evidence="19">
    <location>
        <begin position="50"/>
        <end position="54"/>
    </location>
</feature>
<feature type="turn" evidence="19">
    <location>
        <begin position="55"/>
        <end position="58"/>
    </location>
</feature>
<feature type="strand" evidence="19">
    <location>
        <begin position="59"/>
        <end position="64"/>
    </location>
</feature>
<feature type="strand" evidence="19">
    <location>
        <begin position="73"/>
        <end position="78"/>
    </location>
</feature>
<feature type="helix" evidence="19">
    <location>
        <begin position="80"/>
        <end position="82"/>
    </location>
</feature>
<feature type="helix" evidence="19">
    <location>
        <begin position="85"/>
        <end position="98"/>
    </location>
</feature>
<feature type="helix" evidence="19">
    <location>
        <begin position="103"/>
        <end position="110"/>
    </location>
</feature>
<feature type="turn" evidence="19">
    <location>
        <begin position="111"/>
        <end position="113"/>
    </location>
</feature>
<feature type="strand" evidence="19">
    <location>
        <begin position="117"/>
        <end position="119"/>
    </location>
</feature>
<feature type="strand" evidence="19">
    <location>
        <begin position="122"/>
        <end position="134"/>
    </location>
</feature>
<feature type="strand" evidence="19">
    <location>
        <begin position="139"/>
        <end position="153"/>
    </location>
</feature>
<feature type="helix" evidence="19">
    <location>
        <begin position="155"/>
        <end position="158"/>
    </location>
</feature>
<feature type="turn" evidence="19">
    <location>
        <begin position="159"/>
        <end position="161"/>
    </location>
</feature>
<feature type="helix" evidence="19">
    <location>
        <begin position="163"/>
        <end position="172"/>
    </location>
</feature>
<feature type="turn" evidence="19">
    <location>
        <begin position="174"/>
        <end position="176"/>
    </location>
</feature>
<feature type="strand" evidence="19">
    <location>
        <begin position="178"/>
        <end position="181"/>
    </location>
</feature>
<feature type="strand" evidence="22">
    <location>
        <begin position="183"/>
        <end position="186"/>
    </location>
</feature>
<feature type="strand" evidence="19">
    <location>
        <begin position="189"/>
        <end position="192"/>
    </location>
</feature>
<feature type="turn" evidence="22">
    <location>
        <begin position="196"/>
        <end position="198"/>
    </location>
</feature>
<feature type="strand" evidence="22">
    <location>
        <begin position="199"/>
        <end position="201"/>
    </location>
</feature>
<feature type="helix" evidence="19">
    <location>
        <begin position="207"/>
        <end position="221"/>
    </location>
</feature>
<feature type="helix" evidence="19">
    <location>
        <begin position="225"/>
        <end position="235"/>
    </location>
</feature>
<feature type="strand" evidence="19">
    <location>
        <begin position="244"/>
        <end position="250"/>
    </location>
</feature>
<feature type="strand" evidence="19">
    <location>
        <begin position="261"/>
        <end position="263"/>
    </location>
</feature>
<feature type="turn" evidence="19">
    <location>
        <begin position="265"/>
        <end position="267"/>
    </location>
</feature>
<feature type="strand" evidence="19">
    <location>
        <begin position="268"/>
        <end position="273"/>
    </location>
</feature>
<feature type="helix" evidence="19">
    <location>
        <begin position="274"/>
        <end position="276"/>
    </location>
</feature>
<feature type="helix" evidence="19">
    <location>
        <begin position="284"/>
        <end position="289"/>
    </location>
</feature>
<feature type="helix" evidence="19">
    <location>
        <begin position="293"/>
        <end position="306"/>
    </location>
</feature>
<feature type="strand" evidence="19">
    <location>
        <begin position="310"/>
        <end position="312"/>
    </location>
</feature>
<feature type="strand" evidence="19">
    <location>
        <begin position="318"/>
        <end position="323"/>
    </location>
</feature>
<feature type="helix" evidence="19">
    <location>
        <begin position="326"/>
        <end position="329"/>
    </location>
</feature>
<feature type="strand" evidence="19">
    <location>
        <begin position="330"/>
        <end position="335"/>
    </location>
</feature>
<feature type="strand" evidence="19">
    <location>
        <begin position="337"/>
        <end position="339"/>
    </location>
</feature>
<feature type="strand" evidence="19">
    <location>
        <begin position="341"/>
        <end position="344"/>
    </location>
</feature>
<feature type="strand" evidence="22">
    <location>
        <begin position="354"/>
        <end position="356"/>
    </location>
</feature>
<feature type="helix" evidence="19">
    <location>
        <begin position="357"/>
        <end position="360"/>
    </location>
</feature>
<feature type="strand" evidence="22">
    <location>
        <begin position="361"/>
        <end position="364"/>
    </location>
</feature>
<feature type="helix" evidence="19">
    <location>
        <begin position="375"/>
        <end position="378"/>
    </location>
</feature>
<feature type="strand" evidence="19">
    <location>
        <begin position="384"/>
        <end position="389"/>
    </location>
</feature>
<feature type="helix" evidence="19">
    <location>
        <begin position="394"/>
        <end position="411"/>
    </location>
</feature>
<feature type="turn" evidence="21">
    <location>
        <begin position="412"/>
        <end position="414"/>
    </location>
</feature>
<feature type="strand" evidence="21">
    <location>
        <begin position="415"/>
        <end position="417"/>
    </location>
</feature>
<feature type="turn" evidence="22">
    <location>
        <begin position="421"/>
        <end position="423"/>
    </location>
</feature>
<feature type="strand" evidence="19">
    <location>
        <begin position="444"/>
        <end position="448"/>
    </location>
</feature>
<feature type="helix" evidence="19">
    <location>
        <begin position="453"/>
        <end position="467"/>
    </location>
</feature>
<feature type="strand" evidence="19">
    <location>
        <begin position="473"/>
        <end position="479"/>
    </location>
</feature>
<feature type="helix" evidence="19">
    <location>
        <begin position="485"/>
        <end position="497"/>
    </location>
</feature>
<feature type="strand" evidence="19">
    <location>
        <begin position="500"/>
        <end position="506"/>
    </location>
</feature>
<feature type="helix" evidence="19">
    <location>
        <begin position="507"/>
        <end position="512"/>
    </location>
</feature>
<feature type="strand" evidence="20">
    <location>
        <begin position="513"/>
        <end position="515"/>
    </location>
</feature>
<feature type="strand" evidence="19">
    <location>
        <begin position="518"/>
        <end position="522"/>
    </location>
</feature>
<feature type="helix" evidence="19">
    <location>
        <begin position="524"/>
        <end position="537"/>
    </location>
</feature>
<feature type="strand" evidence="19">
    <location>
        <begin position="544"/>
        <end position="546"/>
    </location>
</feature>
<feature type="strand" evidence="19">
    <location>
        <begin position="550"/>
        <end position="562"/>
    </location>
</feature>
<feature type="turn" evidence="19">
    <location>
        <begin position="565"/>
        <end position="567"/>
    </location>
</feature>
<feature type="strand" evidence="19">
    <location>
        <begin position="569"/>
        <end position="577"/>
    </location>
</feature>
<feature type="strand" evidence="22">
    <location>
        <begin position="578"/>
        <end position="581"/>
    </location>
</feature>
<feature type="strand" evidence="19">
    <location>
        <begin position="582"/>
        <end position="589"/>
    </location>
</feature>
<feature type="strand" evidence="19">
    <location>
        <begin position="594"/>
        <end position="597"/>
    </location>
</feature>
<feature type="helix" evidence="19">
    <location>
        <begin position="600"/>
        <end position="613"/>
    </location>
</feature>
<feature type="strand" evidence="22">
    <location>
        <begin position="615"/>
        <end position="619"/>
    </location>
</feature>
<feature type="strand" evidence="19">
    <location>
        <begin position="622"/>
        <end position="626"/>
    </location>
</feature>
<feature type="helix" evidence="19">
    <location>
        <begin position="633"/>
        <end position="646"/>
    </location>
</feature>
<feature type="strand" evidence="19">
    <location>
        <begin position="649"/>
        <end position="657"/>
    </location>
</feature>
<feature type="strand" evidence="19">
    <location>
        <begin position="663"/>
        <end position="665"/>
    </location>
</feature>
<feature type="strand" evidence="19">
    <location>
        <begin position="669"/>
        <end position="673"/>
    </location>
</feature>
<feature type="strand" evidence="19">
    <location>
        <begin position="676"/>
        <end position="680"/>
    </location>
</feature>
<feature type="strand" evidence="19">
    <location>
        <begin position="685"/>
        <end position="687"/>
    </location>
</feature>
<feature type="strand" evidence="19">
    <location>
        <begin position="694"/>
        <end position="703"/>
    </location>
</feature>
<feature type="strand" evidence="19">
    <location>
        <begin position="706"/>
        <end position="709"/>
    </location>
</feature>
<feature type="helix" evidence="19">
    <location>
        <begin position="714"/>
        <end position="724"/>
    </location>
</feature>
<feature type="helix" evidence="19">
    <location>
        <begin position="739"/>
        <end position="752"/>
    </location>
</feature>
<feature type="helix" evidence="19">
    <location>
        <begin position="759"/>
        <end position="762"/>
    </location>
</feature>
<feature type="turn" evidence="19">
    <location>
        <begin position="763"/>
        <end position="765"/>
    </location>
</feature>
<protein>
    <recommendedName>
        <fullName evidence="10">Protein argonaute</fullName>
        <shortName evidence="10">PfAgo</shortName>
        <ecNumber evidence="6 7">3.1.24.-</ecNumber>
    </recommendedName>
</protein>
<sequence>MKAKVVINLVKINKKIIPDKIYVYRLFNDPEEELQKEGYSIYRLAYENVGIVIDPENLIIATTKELEYEGEFIPEGEISFSELRNDYQSKLVLRLLKENGIGEYELSKLLRKFRKPKTFGDYKVIPSVEMSVIKHDEDFYLVIHIIHQIQSMKTLWELVNKDPKELEEFLMTHKENLMLKDIASPLKTVYKPCFEEYTKKPKLDHNQEIVKYWYNYHIERYWNTPEAKLEFYRKFGQVDLKQPAILAKFASKIKKNKNYKIYLLPQLVVPTYNAEQLESDVAKEILEYTKLMPEERKELLENILAEVDSDIIDKSLSEIEVEKIAQELENKIRVRDDKGNSVPISQLNVQKSQLLLWTNYSRKYPVILPYEVPEKFRKIREIPMFIILDSGLLADIQNFATNEFRELVKSMYYSLAKKYNSLAKKARSTNEIGLPFLDFRGKEKVITEDLNSDKGIIEVVEQVSSFMKGKELGLAFIAARNKLSSEKFEEIKRRLFNLNVISQVVNEDTLKNKRDKYDRNRLDLFVRHNLLFQVLSKLGVKYYVLDYRFNYDYIIGIDVAPMKRSEGYIGGSAVMFDSQGYIRKIVPIKIGEQRGESVDMNEFFKEMVDKFKEFNIKLDNKKILLLRDGRITNNEEEGLKYISEMFDIEVVTMDVIKNHPVRAFANMKMYFNLGGAIYLIPHKLKQAKGTPIPIKLAKKRIIKNGKVEKQSITRQDVLDIFILTRLNYGSISADMRLPAPVHYAHKFANAIRNEWKIKEEFLAEGFLYFV</sequence>
<gene>
    <name evidence="11" type="primary">ago</name>
    <name type="ordered locus">PF0537</name>
</gene>
<proteinExistence type="evidence at protein level"/>
<organism>
    <name type="scientific">Pyrococcus furiosus (strain ATCC 43587 / DSM 3638 / JCM 8422 / Vc1)</name>
    <dbReference type="NCBI Taxonomy" id="186497"/>
    <lineage>
        <taxon>Archaea</taxon>
        <taxon>Methanobacteriati</taxon>
        <taxon>Methanobacteriota</taxon>
        <taxon>Thermococci</taxon>
        <taxon>Thermococcales</taxon>
        <taxon>Thermococcaceae</taxon>
        <taxon>Pyrococcus</taxon>
    </lineage>
</organism>
<name>AGO_PYRFU</name>
<comment type="function">
    <text evidence="6 7">A DNA-guided ssDNA endonuclease that may play a role in defense against invading mobile genetic elements. Uses short 5'-phospho-ssDNA sequences as guides (gDNA) to bind complementary target strands, resulting in cleavage of the target DNA (tDNA). Endonucleolytically cleaves DNA in short dsDNA (the gDNA indicates where to cleave on the tDNA). Efficient guide-dependent target DNA cleavage requires a minimal gDNA length of 15 nucleotides (nt) and works up to at least 31 nt. Overexpression decreases plasmid transformation efficiency. Has no appreciable activity with gRNA or on target RNA. Also has guide-independent activity on plasmid DNA called 'chopping' (PubMed:25925567). The cleavage site is 10 nucleotides (nt) downstream of the target residue base-paired with the 5'-end of the gDNA, cleavage is insensitive to adenine methylation. DNA cleavage produces 5'-phosphomonoesters (as it can be ligated by T4 DNA ligase) (PubMed:28165224).</text>
</comment>
<comment type="cofactor">
    <cofactor evidence="5 6">
        <name>Mn(2+)</name>
        <dbReference type="ChEBI" id="CHEBI:29035"/>
    </cofactor>
    <text evidence="1 5 6">Probably binds 2 Mn(2+) per subunit; only 1 is seen in the structure (By similarity) (PubMed:15800637). Mn(2+) is the preferred cation for cleavage, Co(2+) can be used but not Mg(2+), Ca(2+), Cu(2+), Fe(2+) or Ni(2+) (PubMed:25925567).</text>
</comment>
<comment type="activity regulation">
    <text evidence="6">Inhibited at greater than 500 mM NaCl.</text>
</comment>
<comment type="biophysicochemical properties">
    <temperatureDependence>
        <text evidence="6">Optimum temperature is 87-99.9 degrees Celsius, has very low activity at 37 degrees Celsius after 16 hours.</text>
    </temperatureDependence>
</comment>
<comment type="subunit">
    <text evidence="13 14">Monomer.</text>
</comment>
<comment type="domain">
    <text evidence="4">Has 4 domains; N-terminal, PAZ, Mid and PIWI. The N-terminal, Mid and PIWI domains form a crescent-shaped base with a stalk rising from the end of the N-terminal domain that holds the PAZ domain above the cresent. A groove is present in the center of the crescent closed off by the PAZ domain, in which the putative active sites are found. The PIWI domain assumes an RNase H fold and has the catalytic residues.</text>
</comment>
<comment type="disruption phenotype">
    <text evidence="6">2-fold increased plasmid transformation efficiency.</text>
</comment>
<comment type="biotechnology">
    <text evidence="7">Can be used to create artificial restriction enzymes using denatured tDNA with appropriate guide DNAs. Multiple gDNAs can be used in a single reaction. This is particularly useful when cloning a region without any known restriction enzyme sites.</text>
</comment>
<comment type="biotechnology">
    <text evidence="9">Can be used to detect nucleic acids at the attomolar range (10(-18)).</text>
</comment>
<comment type="biotechnology">
    <text evidence="8">Can be used for genome editing.</text>
</comment>
<comment type="similarity">
    <text evidence="12">Belongs to the argonaute family. Long pAgo subfamily.</text>
</comment>